<comment type="function">
    <text evidence="2">Neurofilaments usually contain three intermediate filament proteins: NEFL, NEFM, and NEFH which are involved in the maintenance of neuronal caliber. May additionally cooperate with the neuronal intermediate filament proteins PRPH and INA to form neuronal filamentous networks (By similarity).</text>
</comment>
<comment type="subunit">
    <text evidence="3">Forms heterodimers with NEFL; which can further hetero-oligomerize (in vitro) (By similarity). Forms heterodimers with INA (in vitro) (By similarity).</text>
</comment>
<comment type="subcellular location">
    <subcellularLocation>
        <location evidence="2">Cytoplasm</location>
        <location evidence="2">Cytoskeleton</location>
    </subcellularLocation>
    <subcellularLocation>
        <location evidence="2">Cell projection</location>
        <location evidence="2">Axon</location>
    </subcellularLocation>
</comment>
<comment type="PTM">
    <text evidence="1">Phosphorylated on a number of serine residues in the repeated K-S-P tripeptide motif. Phosphorylation of NFH may result in the formation of interfilament cross-links that are important in the maintenance of axonal caliber (By similarity).</text>
</comment>
<comment type="PTM">
    <text evidence="1">Phosphorylation seems to play a major role in the functioning of the larger neurofilament polypeptides (NF-M and NF-H), the levels of phosphorylation being altered developmentally and coincidentally with a change in the neurofilament function.</text>
</comment>
<comment type="PTM">
    <text evidence="1">Phosphorylated in the head and rod regions by the PKC kinase PKN1, leading to the inhibition of polymerization.</text>
</comment>
<comment type="mass spectrometry" mass="105044.0" method="MALDI" evidence="6"/>
<comment type="similarity">
    <text evidence="4">Belongs to the intermediate filament family.</text>
</comment>
<evidence type="ECO:0000250" key="1"/>
<evidence type="ECO:0000250" key="2">
    <source>
        <dbReference type="UniProtKB" id="P08553"/>
    </source>
</evidence>
<evidence type="ECO:0000250" key="3">
    <source>
        <dbReference type="UniProtKB" id="P12839"/>
    </source>
</evidence>
<evidence type="ECO:0000255" key="4">
    <source>
        <dbReference type="PROSITE-ProRule" id="PRU01188"/>
    </source>
</evidence>
<evidence type="ECO:0000256" key="5">
    <source>
        <dbReference type="SAM" id="MobiDB-lite"/>
    </source>
</evidence>
<evidence type="ECO:0000269" key="6">
    <source>
    </source>
</evidence>
<protein>
    <recommendedName>
        <fullName>Neurofilament medium polypeptide</fullName>
        <shortName>NF-M</shortName>
    </recommendedName>
    <alternativeName>
        <fullName>160 kDa neurofilament protein</fullName>
    </alternativeName>
    <alternativeName>
        <fullName>Neurofilament 3</fullName>
    </alternativeName>
    <alternativeName>
        <fullName>Neurofilament triplet M protein</fullName>
    </alternativeName>
</protein>
<sequence length="926" mass="103210">MSYTLDSLGNPSAYRRVTETRSSFSRISGSPSSGFRSQSWSRGSPSTVSSSYKRSALAPRLTYSSAMLSSAESSLDFSQSSSLLDGGSGPGGDYKLSRSNEKEQIQGLNDRFAGYIEKVHYLEQQNKEIEAEIQALRQKQASHAQLGDAYDQEIRELRATLEMVNHEKAQVQLDSDHLEEDIHRLKERFEEEARLRDDTEAAIRALRKDIEESSLVKVELDKKVQSLQDEVAFLRSNHEEEVADLLAQIQASHITVERKDYLKTDISTALKEIRSQLESHSDQNMHQAEEWFKCRYAKLTEAAEQNKEAIRSAKEEIAEYRRQLQSKSIELESVRGTKESLERQLSDIEERHNHDLSSYQDTIQQLENELRGTKWEMARHLREYQDLLNVKMALDIEIAAYRKLLEGEETRFSTFAGSITGPLYTHRQPSIAISSKIQKTKVEAPKLKVQHKFVEEIIEETKVEDEKSEMEEALTAITEELAVSVKEEVKEEEAEEKEEKEEAEEEVVAAKKSPVKATAPELKEEEGEKEEEEGQEEEEEEEEAAKSDQAEEGGSEKEGSSEKEEGEQEEEGETEAEGEGEEAAAEAKEEKKMEEKAEEVAPKEELAAEAKVEKPEKAKSPVAKSPTTKSPTAKSPEAKSPEAKSPTAKSPTAKSPVAKSPTAKSPEAKSPEAKSPTAKSPTAKSPAAKSPAPKSPVEEVKPKAEAGAEKGEQKEKVEEEKKEAKESPKEEKAEKKEEKPKDVPEKKKAESPVKAESPVKEEVPAKPVKVSPEKEAKEEEKPQEKEKEKEKVEEVGGKEEGGLKESRKEDIAINGEVEGKEEEQETKEKGSGGEEEKGVVTNGLDVSPGDEKKGGDKSEEKVVVTKMVEKITSEGGDGATKYITKSVTVTQKVEEHEETFEEKLVSTKKVEKVTSHAIVKEVTQSD</sequence>
<keyword id="KW-0007">Acetylation</keyword>
<keyword id="KW-0966">Cell projection</keyword>
<keyword id="KW-0175">Coiled coil</keyword>
<keyword id="KW-0963">Cytoplasm</keyword>
<keyword id="KW-0206">Cytoskeleton</keyword>
<keyword id="KW-0903">Direct protein sequencing</keyword>
<keyword id="KW-0325">Glycoprotein</keyword>
<keyword id="KW-0403">Intermediate filament</keyword>
<keyword id="KW-0488">Methylation</keyword>
<keyword id="KW-0597">Phosphoprotein</keyword>
<keyword id="KW-1185">Reference proteome</keyword>
<keyword id="KW-0677">Repeat</keyword>
<dbReference type="EMBL" id="AF091342">
    <property type="protein sequence ID" value="AAC36357.1"/>
    <property type="molecule type" value="mRNA"/>
</dbReference>
<dbReference type="SMR" id="O77788"/>
<dbReference type="FunCoup" id="O77788">
    <property type="interactions" value="51"/>
</dbReference>
<dbReference type="IntAct" id="O77788">
    <property type="interactions" value="1"/>
</dbReference>
<dbReference type="STRING" id="9913.ENSBTAP00000036438"/>
<dbReference type="GlyCosmos" id="O77788">
    <property type="glycosylation" value="1 site, No reported glycans"/>
</dbReference>
<dbReference type="GlyGen" id="O77788">
    <property type="glycosylation" value="1 site"/>
</dbReference>
<dbReference type="iPTMnet" id="O77788"/>
<dbReference type="PaxDb" id="9913-ENSBTAP00000036438"/>
<dbReference type="PeptideAtlas" id="O77788"/>
<dbReference type="eggNOG" id="KOG1216">
    <property type="taxonomic scope" value="Eukaryota"/>
</dbReference>
<dbReference type="InParanoid" id="O77788"/>
<dbReference type="OrthoDB" id="2441647at2759"/>
<dbReference type="Proteomes" id="UP000009136">
    <property type="component" value="Unplaced"/>
</dbReference>
<dbReference type="GO" id="GO:0030424">
    <property type="term" value="C:axon"/>
    <property type="evidence" value="ECO:0000318"/>
    <property type="project" value="GO_Central"/>
</dbReference>
<dbReference type="GO" id="GO:0005737">
    <property type="term" value="C:cytoplasm"/>
    <property type="evidence" value="ECO:0007669"/>
    <property type="project" value="UniProtKB-KW"/>
</dbReference>
<dbReference type="GO" id="GO:0005882">
    <property type="term" value="C:intermediate filament"/>
    <property type="evidence" value="ECO:0000318"/>
    <property type="project" value="GO_Central"/>
</dbReference>
<dbReference type="GO" id="GO:0099160">
    <property type="term" value="C:postsynaptic intermediate filament cytoskeleton"/>
    <property type="evidence" value="ECO:0000318"/>
    <property type="project" value="GO_Central"/>
</dbReference>
<dbReference type="GO" id="GO:0005200">
    <property type="term" value="F:structural constituent of cytoskeleton"/>
    <property type="evidence" value="ECO:0000318"/>
    <property type="project" value="GO_Central"/>
</dbReference>
<dbReference type="GO" id="GO:0033693">
    <property type="term" value="P:neurofilament bundle assembly"/>
    <property type="evidence" value="ECO:0000318"/>
    <property type="project" value="GO_Central"/>
</dbReference>
<dbReference type="FunFam" id="1.20.5.1160:FF:000001">
    <property type="entry name" value="Keratin type II"/>
    <property type="match status" value="1"/>
</dbReference>
<dbReference type="FunFam" id="1.20.5.170:FF:000002">
    <property type="entry name" value="Type I keratin KA11"/>
    <property type="match status" value="1"/>
</dbReference>
<dbReference type="FunFam" id="1.20.5.500:FF:000001">
    <property type="entry name" value="Type II keratin 23"/>
    <property type="match status" value="1"/>
</dbReference>
<dbReference type="Gene3D" id="1.20.5.170">
    <property type="match status" value="1"/>
</dbReference>
<dbReference type="Gene3D" id="1.20.5.500">
    <property type="entry name" value="Single helix bin"/>
    <property type="match status" value="1"/>
</dbReference>
<dbReference type="Gene3D" id="1.20.5.1160">
    <property type="entry name" value="Vasodilator-stimulated phosphoprotein"/>
    <property type="match status" value="1"/>
</dbReference>
<dbReference type="InterPro" id="IPR018039">
    <property type="entry name" value="IF_conserved"/>
</dbReference>
<dbReference type="InterPro" id="IPR039008">
    <property type="entry name" value="IF_rod_dom"/>
</dbReference>
<dbReference type="InterPro" id="IPR006821">
    <property type="entry name" value="Intermed_filament_DNA-bd"/>
</dbReference>
<dbReference type="InterPro" id="IPR050405">
    <property type="entry name" value="Intermediate_filament"/>
</dbReference>
<dbReference type="InterPro" id="IPR002957">
    <property type="entry name" value="Keratin_I"/>
</dbReference>
<dbReference type="PANTHER" id="PTHR45652">
    <property type="entry name" value="GLIAL FIBRILLARY ACIDIC PROTEIN"/>
    <property type="match status" value="1"/>
</dbReference>
<dbReference type="PANTHER" id="PTHR45652:SF3">
    <property type="entry name" value="NEUROFILAMENT MEDIUM POLYPEPTIDE"/>
    <property type="match status" value="1"/>
</dbReference>
<dbReference type="Pfam" id="PF00038">
    <property type="entry name" value="Filament"/>
    <property type="match status" value="1"/>
</dbReference>
<dbReference type="Pfam" id="PF04732">
    <property type="entry name" value="Filament_head"/>
    <property type="match status" value="1"/>
</dbReference>
<dbReference type="PRINTS" id="PR01248">
    <property type="entry name" value="TYPE1KERATIN"/>
</dbReference>
<dbReference type="SMART" id="SM01391">
    <property type="entry name" value="Filament"/>
    <property type="match status" value="1"/>
</dbReference>
<dbReference type="SUPFAM" id="SSF64593">
    <property type="entry name" value="Intermediate filament protein, coiled coil region"/>
    <property type="match status" value="2"/>
</dbReference>
<dbReference type="PROSITE" id="PS00226">
    <property type="entry name" value="IF_ROD_1"/>
    <property type="match status" value="1"/>
</dbReference>
<dbReference type="PROSITE" id="PS51842">
    <property type="entry name" value="IF_ROD_2"/>
    <property type="match status" value="1"/>
</dbReference>
<organism>
    <name type="scientific">Bos taurus</name>
    <name type="common">Bovine</name>
    <dbReference type="NCBI Taxonomy" id="9913"/>
    <lineage>
        <taxon>Eukaryota</taxon>
        <taxon>Metazoa</taxon>
        <taxon>Chordata</taxon>
        <taxon>Craniata</taxon>
        <taxon>Vertebrata</taxon>
        <taxon>Euteleostomi</taxon>
        <taxon>Mammalia</taxon>
        <taxon>Eutheria</taxon>
        <taxon>Laurasiatheria</taxon>
        <taxon>Artiodactyla</taxon>
        <taxon>Ruminantia</taxon>
        <taxon>Pecora</taxon>
        <taxon>Bovidae</taxon>
        <taxon>Bovinae</taxon>
        <taxon>Bos</taxon>
    </lineage>
</organism>
<gene>
    <name type="primary">NEFM</name>
    <name type="synonym">NEF3</name>
    <name type="synonym">NFM</name>
</gene>
<name>NFM_BOVIN</name>
<accession>O77788</accession>
<feature type="initiator methionine" description="Removed" evidence="6">
    <location>
        <position position="1"/>
    </location>
</feature>
<feature type="chain" id="PRO_0000063793" description="Neurofilament medium polypeptide">
    <location>
        <begin position="2"/>
        <end position="926"/>
    </location>
</feature>
<feature type="domain" description="IF rod" evidence="4">
    <location>
        <begin position="101"/>
        <end position="412"/>
    </location>
</feature>
<feature type="repeat" description="1">
    <location>
        <begin position="512"/>
        <end position="516"/>
    </location>
</feature>
<feature type="repeat" description="2">
    <location>
        <begin position="619"/>
        <end position="623"/>
    </location>
</feature>
<feature type="repeat" description="3">
    <location>
        <begin position="624"/>
        <end position="628"/>
    </location>
</feature>
<feature type="repeat" description="4">
    <location>
        <begin position="629"/>
        <end position="633"/>
    </location>
</feature>
<feature type="repeat" description="5">
    <location>
        <begin position="634"/>
        <end position="638"/>
    </location>
</feature>
<feature type="repeat" description="6">
    <location>
        <begin position="639"/>
        <end position="643"/>
    </location>
</feature>
<feature type="repeat" description="7">
    <location>
        <begin position="644"/>
        <end position="648"/>
    </location>
</feature>
<feature type="repeat" description="8">
    <location>
        <begin position="649"/>
        <end position="653"/>
    </location>
</feature>
<feature type="repeat" description="9">
    <location>
        <begin position="654"/>
        <end position="658"/>
    </location>
</feature>
<feature type="repeat" description="10">
    <location>
        <begin position="659"/>
        <end position="663"/>
    </location>
</feature>
<feature type="repeat" description="11">
    <location>
        <begin position="664"/>
        <end position="668"/>
    </location>
</feature>
<feature type="repeat" description="12">
    <location>
        <begin position="669"/>
        <end position="673"/>
    </location>
</feature>
<feature type="repeat" description="13">
    <location>
        <begin position="674"/>
        <end position="678"/>
    </location>
</feature>
<feature type="repeat" description="14">
    <location>
        <begin position="679"/>
        <end position="683"/>
    </location>
</feature>
<feature type="repeat" description="15">
    <location>
        <begin position="684"/>
        <end position="688"/>
    </location>
</feature>
<feature type="repeat" description="16">
    <location>
        <begin position="689"/>
        <end position="693"/>
    </location>
</feature>
<feature type="repeat" description="17">
    <location>
        <begin position="694"/>
        <end position="698"/>
    </location>
</feature>
<feature type="region of interest" description="Disordered" evidence="5">
    <location>
        <begin position="1"/>
        <end position="51"/>
    </location>
</feature>
<feature type="region of interest" description="Head">
    <location>
        <begin position="2"/>
        <end position="104"/>
    </location>
</feature>
<feature type="region of interest" description="Disordered" evidence="5">
    <location>
        <begin position="79"/>
        <end position="102"/>
    </location>
</feature>
<feature type="region of interest" description="Coil 1A">
    <location>
        <begin position="105"/>
        <end position="136"/>
    </location>
</feature>
<feature type="region of interest" description="Linker 1">
    <location>
        <begin position="137"/>
        <end position="149"/>
    </location>
</feature>
<feature type="region of interest" description="Coil 1B">
    <location>
        <begin position="150"/>
        <end position="248"/>
    </location>
</feature>
<feature type="region of interest" description="Linker 12">
    <location>
        <begin position="249"/>
        <end position="265"/>
    </location>
</feature>
<feature type="region of interest" description="Coil 2A">
    <location>
        <begin position="266"/>
        <end position="287"/>
    </location>
</feature>
<feature type="region of interest" description="Linker 2">
    <location>
        <begin position="288"/>
        <end position="291"/>
    </location>
</feature>
<feature type="region of interest" description="Coil 2B">
    <location>
        <begin position="292"/>
        <end position="412"/>
    </location>
</feature>
<feature type="region of interest" description="Tail">
    <location>
        <begin position="413"/>
        <end position="926"/>
    </location>
</feature>
<feature type="region of interest" description="Disordered" evidence="5">
    <location>
        <begin position="487"/>
        <end position="860"/>
    </location>
</feature>
<feature type="region of interest" description="17 X 5 AA approximate tandem repeats of K-S-P-[TVEA]-[AKETP]">
    <location>
        <begin position="512"/>
        <end position="698"/>
    </location>
</feature>
<feature type="compositionally biased region" description="Polar residues" evidence="5">
    <location>
        <begin position="1"/>
        <end position="10"/>
    </location>
</feature>
<feature type="compositionally biased region" description="Low complexity" evidence="5">
    <location>
        <begin position="21"/>
        <end position="44"/>
    </location>
</feature>
<feature type="compositionally biased region" description="Acidic residues" evidence="5">
    <location>
        <begin position="490"/>
        <end position="507"/>
    </location>
</feature>
<feature type="compositionally biased region" description="Acidic residues" evidence="5">
    <location>
        <begin position="523"/>
        <end position="543"/>
    </location>
</feature>
<feature type="compositionally biased region" description="Basic and acidic residues" evidence="5">
    <location>
        <begin position="544"/>
        <end position="563"/>
    </location>
</feature>
<feature type="compositionally biased region" description="Acidic residues" evidence="5">
    <location>
        <begin position="564"/>
        <end position="584"/>
    </location>
</feature>
<feature type="compositionally biased region" description="Basic and acidic residues" evidence="5">
    <location>
        <begin position="585"/>
        <end position="619"/>
    </location>
</feature>
<feature type="compositionally biased region" description="Low complexity" evidence="5">
    <location>
        <begin position="673"/>
        <end position="692"/>
    </location>
</feature>
<feature type="compositionally biased region" description="Basic and acidic residues" evidence="5">
    <location>
        <begin position="696"/>
        <end position="764"/>
    </location>
</feature>
<feature type="compositionally biased region" description="Basic and acidic residues" evidence="5">
    <location>
        <begin position="771"/>
        <end position="811"/>
    </location>
</feature>
<feature type="compositionally biased region" description="Basic and acidic residues" evidence="5">
    <location>
        <begin position="826"/>
        <end position="838"/>
    </location>
</feature>
<feature type="compositionally biased region" description="Basic and acidic residues" evidence="5">
    <location>
        <begin position="849"/>
        <end position="860"/>
    </location>
</feature>
<feature type="modified residue" description="N-acetylserine" evidence="6">
    <location>
        <position position="2"/>
    </location>
</feature>
<feature type="modified residue" description="Phosphoserine" evidence="3">
    <location>
        <position position="30"/>
    </location>
</feature>
<feature type="modified residue" description="Omega-N-methylarginine" evidence="2">
    <location>
        <position position="42"/>
    </location>
</feature>
<feature type="modified residue" description="Phosphoserine" evidence="2">
    <location>
        <position position="99"/>
    </location>
</feature>
<feature type="modified residue" description="Phosphoserine" evidence="2">
    <location>
        <position position="226"/>
    </location>
</feature>
<feature type="modified residue" description="Phosphotyrosine" evidence="2">
    <location>
        <position position="320"/>
    </location>
</feature>
<feature type="modified residue" description="Phosphoserine" evidence="3">
    <location>
        <position position="346"/>
    </location>
</feature>
<feature type="modified residue" description="Phosphoserine" evidence="3">
    <location>
        <position position="418"/>
    </location>
</feature>
<feature type="modified residue" description="Phosphoserine" evidence="3">
    <location>
        <position position="430"/>
    </location>
</feature>
<feature type="modified residue" description="Phosphoserine" evidence="3">
    <location>
        <position position="468"/>
    </location>
</feature>
<feature type="modified residue" description="Phosphoserine" evidence="3">
    <location>
        <position position="484"/>
    </location>
</feature>
<feature type="modified residue" description="Phosphoserine" evidence="6">
    <location>
        <position position="513"/>
    </location>
</feature>
<feature type="modified residue" description="Phosphoserine" evidence="6">
    <location>
        <position position="547"/>
    </location>
</feature>
<feature type="modified residue" description="Phosphoserine" evidence="6">
    <location>
        <position position="555"/>
    </location>
</feature>
<feature type="modified residue" description="Phosphoserine" evidence="2">
    <location>
        <position position="560"/>
    </location>
</feature>
<feature type="modified residue" description="Phosphoserine" evidence="6">
    <location>
        <position position="561"/>
    </location>
</feature>
<feature type="modified residue" description="Phosphothreonine" evidence="2">
    <location>
        <position position="574"/>
    </location>
</feature>
<feature type="modified residue" description="Phosphothreonine" evidence="6">
    <location>
        <position position="628"/>
    </location>
</feature>
<feature type="modified residue" description="Phosphoserine" evidence="6">
    <location>
        <position position="630"/>
    </location>
</feature>
<feature type="modified residue" description="Phosphoserine" evidence="6">
    <location>
        <position position="635"/>
    </location>
</feature>
<feature type="modified residue" description="Phosphoserine" evidence="6">
    <location>
        <position position="640"/>
    </location>
</feature>
<feature type="modified residue" description="Phosphothreonine" evidence="6">
    <location>
        <position position="647"/>
    </location>
</feature>
<feature type="modified residue" description="Phosphoserine" evidence="6">
    <location>
        <position position="650"/>
    </location>
</feature>
<feature type="modified residue" description="Phosphoserine" evidence="6">
    <location>
        <position position="655"/>
    </location>
</feature>
<feature type="modified residue" description="Phosphoserine" evidence="6">
    <location>
        <position position="665"/>
    </location>
</feature>
<feature type="modified residue" description="Phosphoserine" evidence="6">
    <location>
        <position position="670"/>
    </location>
</feature>
<feature type="modified residue" description="Phosphothreonine" evidence="6">
    <location>
        <position position="677"/>
    </location>
</feature>
<feature type="modified residue" description="Phosphoserine" evidence="6">
    <location>
        <position position="680"/>
    </location>
</feature>
<feature type="modified residue" description="Phosphoserine" evidence="6">
    <location>
        <position position="685"/>
    </location>
</feature>
<feature type="modified residue" description="Phosphoserine" evidence="2">
    <location>
        <position position="690"/>
    </location>
</feature>
<feature type="modified residue" description="Phosphoserine" evidence="6">
    <location>
        <position position="695"/>
    </location>
</feature>
<feature type="modified residue" description="Phosphoserine" evidence="6">
    <location>
        <position position="727"/>
    </location>
</feature>
<feature type="modified residue" description="Phosphoserine" evidence="6">
    <location>
        <position position="751"/>
    </location>
</feature>
<feature type="modified residue" description="Phosphoserine" evidence="6">
    <location>
        <position position="757"/>
    </location>
</feature>
<feature type="modified residue" description="Phosphoserine" evidence="6">
    <location>
        <position position="771"/>
    </location>
</feature>
<feature type="modified residue" description="Phosphoserine" evidence="3">
    <location>
        <position position="831"/>
    </location>
</feature>
<feature type="modified residue" description="Phosphoserine" evidence="6">
    <location>
        <position position="847"/>
    </location>
</feature>
<feature type="glycosylation site" description="O-linked (GlcNAc) threonine" evidence="1">
    <location>
        <position position="47"/>
    </location>
</feature>
<reference key="1">
    <citation type="journal article" date="2004" name="Biochemistry">
        <title>Identification of endogenous phosphorylation sites of bovine medium and low molecular weight neurofilament proteins by tandem mass spectrometry.</title>
        <authorList>
            <person name="Trimpin S."/>
            <person name="Mixon A.E."/>
            <person name="Stapels M.D."/>
            <person name="Kim M.Y."/>
            <person name="Spencer P.S."/>
            <person name="Deinzer M.L."/>
        </authorList>
    </citation>
    <scope>PROTEIN SEQUENCE OF 2-116</scope>
    <scope>ACETYLATION AT SER-2</scope>
    <scope>PHOSPHORYLATION AT SER-513; SER-547; SER-555; SER-561; THR-628; SER-630; SER-635; SER-640; THR-647; SER-650; SER-655; SER-665; SER-670; THR-677; SER-680; SER-685; SER-695; SER-727; SER-751; SER-757; SER-771 AND SER-847</scope>
    <scope>MASS SPECTROMETRY</scope>
</reference>
<reference key="2">
    <citation type="submission" date="1998-09" db="EMBL/GenBank/DDBJ databases">
        <title>The bovine neurofilament M subunit has a novel set of KSP repeats normally restricted to NF-H.</title>
        <authorList>
            <person name="Hill W.D."/>
            <person name="Zhang L."/>
            <person name="Balin B.J."/>
            <person name="Sprinkle T.J."/>
            <person name="Spicer K."/>
            <person name="Gearhart D.A."/>
        </authorList>
    </citation>
    <scope>NUCLEOTIDE SEQUENCE [MRNA] OF 117-926</scope>
</reference>
<proteinExistence type="evidence at protein level"/>